<feature type="chain" id="PRO_0000269368" description="Large ribosomal subunit protein bL21">
    <location>
        <begin position="1"/>
        <end position="103"/>
    </location>
</feature>
<organism>
    <name type="scientific">Cupriavidus metallidurans (strain ATCC 43123 / DSM 2839 / NBRC 102507 / CH34)</name>
    <name type="common">Ralstonia metallidurans</name>
    <dbReference type="NCBI Taxonomy" id="266264"/>
    <lineage>
        <taxon>Bacteria</taxon>
        <taxon>Pseudomonadati</taxon>
        <taxon>Pseudomonadota</taxon>
        <taxon>Betaproteobacteria</taxon>
        <taxon>Burkholderiales</taxon>
        <taxon>Burkholderiaceae</taxon>
        <taxon>Cupriavidus</taxon>
    </lineage>
</organism>
<comment type="function">
    <text evidence="1">This protein binds to 23S rRNA in the presence of protein L20.</text>
</comment>
<comment type="subunit">
    <text evidence="1">Part of the 50S ribosomal subunit. Contacts protein L20.</text>
</comment>
<comment type="similarity">
    <text evidence="1">Belongs to the bacterial ribosomal protein bL21 family.</text>
</comment>
<reference key="1">
    <citation type="journal article" date="2010" name="PLoS ONE">
        <title>The complete genome sequence of Cupriavidus metallidurans strain CH34, a master survivalist in harsh and anthropogenic environments.</title>
        <authorList>
            <person name="Janssen P.J."/>
            <person name="Van Houdt R."/>
            <person name="Moors H."/>
            <person name="Monsieurs P."/>
            <person name="Morin N."/>
            <person name="Michaux A."/>
            <person name="Benotmane M.A."/>
            <person name="Leys N."/>
            <person name="Vallaeys T."/>
            <person name="Lapidus A."/>
            <person name="Monchy S."/>
            <person name="Medigue C."/>
            <person name="Taghavi S."/>
            <person name="McCorkle S."/>
            <person name="Dunn J."/>
            <person name="van der Lelie D."/>
            <person name="Mergeay M."/>
        </authorList>
    </citation>
    <scope>NUCLEOTIDE SEQUENCE [LARGE SCALE GENOMIC DNA]</scope>
    <source>
        <strain>ATCC 43123 / DSM 2839 / NBRC 102507 / CH34</strain>
    </source>
</reference>
<keyword id="KW-1185">Reference proteome</keyword>
<keyword id="KW-0687">Ribonucleoprotein</keyword>
<keyword id="KW-0689">Ribosomal protein</keyword>
<keyword id="KW-0694">RNA-binding</keyword>
<keyword id="KW-0699">rRNA-binding</keyword>
<protein>
    <recommendedName>
        <fullName evidence="1">Large ribosomal subunit protein bL21</fullName>
    </recommendedName>
    <alternativeName>
        <fullName evidence="2">50S ribosomal protein L21</fullName>
    </alternativeName>
</protein>
<name>RL21_CUPMC</name>
<sequence length="103" mass="11374">MYAVVKTGGKQYKVAAGEKLKVEQIPADIGAEITLDQVLAVGAGDQIKFGTPLVSGASVKATVIAQGRHDKVKIFKMRRRKHYQKRQGHRQNYTELRIEAIVA</sequence>
<evidence type="ECO:0000255" key="1">
    <source>
        <dbReference type="HAMAP-Rule" id="MF_01363"/>
    </source>
</evidence>
<evidence type="ECO:0000305" key="2"/>
<proteinExistence type="inferred from homology"/>
<dbReference type="EMBL" id="CP000352">
    <property type="protein sequence ID" value="ABF09978.1"/>
    <property type="molecule type" value="Genomic_DNA"/>
</dbReference>
<dbReference type="RefSeq" id="WP_008647259.1">
    <property type="nucleotide sequence ID" value="NC_007973.1"/>
</dbReference>
<dbReference type="SMR" id="Q1LIP8"/>
<dbReference type="STRING" id="266264.Rmet_3106"/>
<dbReference type="GeneID" id="92818210"/>
<dbReference type="KEGG" id="rme:Rmet_3106"/>
<dbReference type="eggNOG" id="COG0261">
    <property type="taxonomic scope" value="Bacteria"/>
</dbReference>
<dbReference type="HOGENOM" id="CLU_061463_3_2_4"/>
<dbReference type="Proteomes" id="UP000002429">
    <property type="component" value="Chromosome"/>
</dbReference>
<dbReference type="GO" id="GO:0005737">
    <property type="term" value="C:cytoplasm"/>
    <property type="evidence" value="ECO:0007669"/>
    <property type="project" value="UniProtKB-ARBA"/>
</dbReference>
<dbReference type="GO" id="GO:1990904">
    <property type="term" value="C:ribonucleoprotein complex"/>
    <property type="evidence" value="ECO:0007669"/>
    <property type="project" value="UniProtKB-KW"/>
</dbReference>
<dbReference type="GO" id="GO:0005840">
    <property type="term" value="C:ribosome"/>
    <property type="evidence" value="ECO:0007669"/>
    <property type="project" value="UniProtKB-KW"/>
</dbReference>
<dbReference type="GO" id="GO:0019843">
    <property type="term" value="F:rRNA binding"/>
    <property type="evidence" value="ECO:0007669"/>
    <property type="project" value="UniProtKB-UniRule"/>
</dbReference>
<dbReference type="GO" id="GO:0003735">
    <property type="term" value="F:structural constituent of ribosome"/>
    <property type="evidence" value="ECO:0007669"/>
    <property type="project" value="InterPro"/>
</dbReference>
<dbReference type="GO" id="GO:0006412">
    <property type="term" value="P:translation"/>
    <property type="evidence" value="ECO:0007669"/>
    <property type="project" value="UniProtKB-UniRule"/>
</dbReference>
<dbReference type="HAMAP" id="MF_01363">
    <property type="entry name" value="Ribosomal_bL21"/>
    <property type="match status" value="1"/>
</dbReference>
<dbReference type="InterPro" id="IPR028909">
    <property type="entry name" value="bL21-like"/>
</dbReference>
<dbReference type="InterPro" id="IPR036164">
    <property type="entry name" value="bL21-like_sf"/>
</dbReference>
<dbReference type="InterPro" id="IPR001787">
    <property type="entry name" value="Ribosomal_bL21"/>
</dbReference>
<dbReference type="InterPro" id="IPR018258">
    <property type="entry name" value="Ribosomal_bL21_CS"/>
</dbReference>
<dbReference type="NCBIfam" id="TIGR00061">
    <property type="entry name" value="L21"/>
    <property type="match status" value="1"/>
</dbReference>
<dbReference type="PANTHER" id="PTHR21349">
    <property type="entry name" value="50S RIBOSOMAL PROTEIN L21"/>
    <property type="match status" value="1"/>
</dbReference>
<dbReference type="PANTHER" id="PTHR21349:SF0">
    <property type="entry name" value="LARGE RIBOSOMAL SUBUNIT PROTEIN BL21M"/>
    <property type="match status" value="1"/>
</dbReference>
<dbReference type="Pfam" id="PF00829">
    <property type="entry name" value="Ribosomal_L21p"/>
    <property type="match status" value="1"/>
</dbReference>
<dbReference type="SUPFAM" id="SSF141091">
    <property type="entry name" value="L21p-like"/>
    <property type="match status" value="1"/>
</dbReference>
<dbReference type="PROSITE" id="PS01169">
    <property type="entry name" value="RIBOSOMAL_L21"/>
    <property type="match status" value="1"/>
</dbReference>
<gene>
    <name evidence="1" type="primary">rplU</name>
    <name type="ordered locus">Rmet_3106</name>
</gene>
<accession>Q1LIP8</accession>